<comment type="function">
    <text evidence="6">Involved in DNA repair and mitotic recombination. May play an active role in recombination processes in concert with other members of the RAD52 epistasis group.</text>
</comment>
<comment type="subunit">
    <text evidence="1">Interacts with RAD51 through the NH2-terminal domain.</text>
</comment>
<comment type="subcellular location">
    <subcellularLocation>
        <location evidence="7">Nucleus</location>
    </subcellularLocation>
</comment>
<comment type="similarity">
    <text evidence="7">Belongs to the SNF2/RAD54 helicase family.</text>
</comment>
<sequence length="886" mass="99338">MRRSAAPSQVQGKSFKKTRFIPPGRSNADVSKEITKMSPDPKLFQGAEQSQNDPGVCSSNPCPSEGIPREVGDGTRVDPLPPVHSASKEITESKAQEEEASSLLKYFSVVWCKASKKKHKKWEGDAILIVRGRSFTLKDLEGKDIGRGIGYKFKDLENVEEGQTLIIGGKEIEILGTISSDDFNSGKCFQHGSGSPAVPSSQAARKCFSNPFKSVCQSTQAQGKRWNDCRPRHNPCTPNALVMPRPDENHQRMFNRHCSPIVDVVIDPHLVHHLRPHQKDGIIFLYECVMGMRAVGKCGAILADEMGLGKTLQCISLIWTLQCQGPYGGKPVIKKTLIVTPGSLVNNWRKEFQKWLGSERIKIFTVDQDHKVEEFINSTFHSVLIISYEMLLRSLDQIKTIPFGLLICDEGHRLKNSSIKTTTALSSLSCEKTVILTGTPVQNDLQEFFALVDFVNPGILGSLSSYRKIYEEPIIISREPSSSKEERELGERRATELTRLTGRFILRRTQEVINKYLPPKIENVVFCRPGALQIELYRKLLRSQSVRFCLQGLLENSAHLICIGALKKLCNHPCLLFSSVKGKEFSSSCEENEERNLCQGLLSVFPAGYNPLQFSEEESGKLQVLVKLLAVIHELRPTEKVILVSNYRQTLNVLEEVCKRHGYACARLDGQTPVSQRQHIVDSFNSKYSTDFIFLLSSKAGGVGLNLIGGSHLILYDIDWNPATDIQAMSRVWRDGQKHPVHIYRLLTTGTIEEKIYQRQISKQGLSGAVVDLTRSSEHIQFSVEELKNLFTLHESSHCVTHDLLDCECTGEKGHTEDASEGPVASRQCQFGPQKSDALRPLSMSQLKQWKHFSGDHLNLPDPFLERIRENVSFFFQNITNQAPAV</sequence>
<dbReference type="EC" id="3.6.4.-"/>
<dbReference type="EMBL" id="AL732538">
    <property type="status" value="NOT_ANNOTATED_CDS"/>
    <property type="molecule type" value="Genomic_DNA"/>
</dbReference>
<dbReference type="EMBL" id="BC057604">
    <property type="protein sequence ID" value="AAH57604.1"/>
    <property type="molecule type" value="mRNA"/>
</dbReference>
<dbReference type="CCDS" id="CCDS17970.1"/>
<dbReference type="RefSeq" id="NP_001034645.1">
    <property type="nucleotide sequence ID" value="NM_001039556.4"/>
</dbReference>
<dbReference type="SMR" id="Q6PFE3"/>
<dbReference type="BioGRID" id="550136">
    <property type="interactions" value="4"/>
</dbReference>
<dbReference type="FunCoup" id="Q6PFE3">
    <property type="interactions" value="1538"/>
</dbReference>
<dbReference type="IntAct" id="Q6PFE3">
    <property type="interactions" value="1"/>
</dbReference>
<dbReference type="MINT" id="Q6PFE3"/>
<dbReference type="STRING" id="10090.ENSMUSP00000066977"/>
<dbReference type="iPTMnet" id="Q6PFE3"/>
<dbReference type="PhosphoSitePlus" id="Q6PFE3"/>
<dbReference type="PaxDb" id="10090-ENSMUSP00000066977"/>
<dbReference type="ProteomicsDB" id="300340"/>
<dbReference type="Pumba" id="Q6PFE3"/>
<dbReference type="Antibodypedia" id="1882">
    <property type="antibodies" value="208 antibodies from 27 providers"/>
</dbReference>
<dbReference type="Ensembl" id="ENSMUST00000070755.13">
    <property type="protein sequence ID" value="ENSMUSP00000066977.7"/>
    <property type="gene ID" value="ENSMUSG00000078773.12"/>
</dbReference>
<dbReference type="GeneID" id="623474"/>
<dbReference type="KEGG" id="mmu:623474"/>
<dbReference type="UCSC" id="uc008rzs.2">
    <property type="organism name" value="mouse"/>
</dbReference>
<dbReference type="AGR" id="MGI:3605986"/>
<dbReference type="CTD" id="25788"/>
<dbReference type="MGI" id="MGI:3605986">
    <property type="gene designation" value="Rad54b"/>
</dbReference>
<dbReference type="VEuPathDB" id="HostDB:ENSMUSG00000078773"/>
<dbReference type="eggNOG" id="KOG0390">
    <property type="taxonomic scope" value="Eukaryota"/>
</dbReference>
<dbReference type="GeneTree" id="ENSGT00940000156966"/>
<dbReference type="HOGENOM" id="CLU_000315_10_1_1"/>
<dbReference type="InParanoid" id="Q6PFE3"/>
<dbReference type="OMA" id="KCQTHEL"/>
<dbReference type="OrthoDB" id="413460at2759"/>
<dbReference type="PhylomeDB" id="Q6PFE3"/>
<dbReference type="TreeFam" id="TF101223"/>
<dbReference type="BioGRID-ORCS" id="623474">
    <property type="hits" value="3 hits in 117 CRISPR screens"/>
</dbReference>
<dbReference type="ChiTaRS" id="Rad54b">
    <property type="organism name" value="mouse"/>
</dbReference>
<dbReference type="PRO" id="PR:Q6PFE3"/>
<dbReference type="Proteomes" id="UP000000589">
    <property type="component" value="Chromosome 4"/>
</dbReference>
<dbReference type="RNAct" id="Q6PFE3">
    <property type="molecule type" value="protein"/>
</dbReference>
<dbReference type="Bgee" id="ENSMUSG00000078773">
    <property type="expression patterns" value="Expressed in dorsal pancreas and 170 other cell types or tissues"/>
</dbReference>
<dbReference type="ExpressionAtlas" id="Q6PFE3">
    <property type="expression patterns" value="baseline and differential"/>
</dbReference>
<dbReference type="GO" id="GO:0005634">
    <property type="term" value="C:nucleus"/>
    <property type="evidence" value="ECO:0007669"/>
    <property type="project" value="UniProtKB-SubCell"/>
</dbReference>
<dbReference type="GO" id="GO:0005524">
    <property type="term" value="F:ATP binding"/>
    <property type="evidence" value="ECO:0007669"/>
    <property type="project" value="UniProtKB-KW"/>
</dbReference>
<dbReference type="GO" id="GO:0003677">
    <property type="term" value="F:DNA binding"/>
    <property type="evidence" value="ECO:0007669"/>
    <property type="project" value="UniProtKB-KW"/>
</dbReference>
<dbReference type="GO" id="GO:0015616">
    <property type="term" value="F:DNA translocase activity"/>
    <property type="evidence" value="ECO:0000266"/>
    <property type="project" value="MGI"/>
</dbReference>
<dbReference type="GO" id="GO:0004386">
    <property type="term" value="F:helicase activity"/>
    <property type="evidence" value="ECO:0007669"/>
    <property type="project" value="UniProtKB-KW"/>
</dbReference>
<dbReference type="GO" id="GO:0016787">
    <property type="term" value="F:hydrolase activity"/>
    <property type="evidence" value="ECO:0007669"/>
    <property type="project" value="UniProtKB-KW"/>
</dbReference>
<dbReference type="GO" id="GO:0008340">
    <property type="term" value="P:determination of adult lifespan"/>
    <property type="evidence" value="ECO:0000316"/>
    <property type="project" value="MGI"/>
</dbReference>
<dbReference type="GO" id="GO:0006974">
    <property type="term" value="P:DNA damage response"/>
    <property type="evidence" value="ECO:0000315"/>
    <property type="project" value="MGI"/>
</dbReference>
<dbReference type="GO" id="GO:0000724">
    <property type="term" value="P:double-strand break repair via homologous recombination"/>
    <property type="evidence" value="ECO:0000315"/>
    <property type="project" value="MGI"/>
</dbReference>
<dbReference type="GO" id="GO:0010212">
    <property type="term" value="P:response to ionizing radiation"/>
    <property type="evidence" value="ECO:0000315"/>
    <property type="project" value="MGI"/>
</dbReference>
<dbReference type="GO" id="GO:0009410">
    <property type="term" value="P:response to xenobiotic stimulus"/>
    <property type="evidence" value="ECO:0000315"/>
    <property type="project" value="MGI"/>
</dbReference>
<dbReference type="CDD" id="cd18066">
    <property type="entry name" value="DEXHc_RAD54B"/>
    <property type="match status" value="1"/>
</dbReference>
<dbReference type="CDD" id="cd18793">
    <property type="entry name" value="SF2_C_SNF"/>
    <property type="match status" value="1"/>
</dbReference>
<dbReference type="FunFam" id="3.40.50.300:FF:000332">
    <property type="entry name" value="DNA repair and recombination protein RAD54-like"/>
    <property type="match status" value="1"/>
</dbReference>
<dbReference type="FunFam" id="1.20.120.850:FF:000004">
    <property type="entry name" value="DNA repair and recombination protein RAD54B"/>
    <property type="match status" value="1"/>
</dbReference>
<dbReference type="FunFam" id="3.40.50.10810:FF:000020">
    <property type="entry name" value="DNA repair and recombination protein RAD54B"/>
    <property type="match status" value="1"/>
</dbReference>
<dbReference type="Gene3D" id="3.40.50.300">
    <property type="entry name" value="P-loop containing nucleotide triphosphate hydrolases"/>
    <property type="match status" value="1"/>
</dbReference>
<dbReference type="Gene3D" id="1.20.120.850">
    <property type="entry name" value="SWI2/SNF2 ATPases, N-terminal domain"/>
    <property type="match status" value="1"/>
</dbReference>
<dbReference type="Gene3D" id="3.40.50.10810">
    <property type="entry name" value="Tandem AAA-ATPase domain"/>
    <property type="match status" value="1"/>
</dbReference>
<dbReference type="InterPro" id="IPR014001">
    <property type="entry name" value="Helicase_ATP-bd"/>
</dbReference>
<dbReference type="InterPro" id="IPR001650">
    <property type="entry name" value="Helicase_C-like"/>
</dbReference>
<dbReference type="InterPro" id="IPR027417">
    <property type="entry name" value="P-loop_NTPase"/>
</dbReference>
<dbReference type="InterPro" id="IPR038718">
    <property type="entry name" value="SNF2-like_sf"/>
</dbReference>
<dbReference type="InterPro" id="IPR049730">
    <property type="entry name" value="SNF2/RAD54-like_C"/>
</dbReference>
<dbReference type="InterPro" id="IPR000330">
    <property type="entry name" value="SNF2_N"/>
</dbReference>
<dbReference type="InterPro" id="IPR050496">
    <property type="entry name" value="SNF2_RAD54_helicase_repair"/>
</dbReference>
<dbReference type="PANTHER" id="PTHR45629:SF7">
    <property type="entry name" value="DNA EXCISION REPAIR PROTEIN ERCC-6-RELATED"/>
    <property type="match status" value="1"/>
</dbReference>
<dbReference type="PANTHER" id="PTHR45629">
    <property type="entry name" value="SNF2/RAD54 FAMILY MEMBER"/>
    <property type="match status" value="1"/>
</dbReference>
<dbReference type="Pfam" id="PF00271">
    <property type="entry name" value="Helicase_C"/>
    <property type="match status" value="1"/>
</dbReference>
<dbReference type="Pfam" id="PF00176">
    <property type="entry name" value="SNF2-rel_dom"/>
    <property type="match status" value="1"/>
</dbReference>
<dbReference type="SMART" id="SM00487">
    <property type="entry name" value="DEXDc"/>
    <property type="match status" value="1"/>
</dbReference>
<dbReference type="SMART" id="SM00490">
    <property type="entry name" value="HELICc"/>
    <property type="match status" value="1"/>
</dbReference>
<dbReference type="SUPFAM" id="SSF52540">
    <property type="entry name" value="P-loop containing nucleoside triphosphate hydrolases"/>
    <property type="match status" value="2"/>
</dbReference>
<dbReference type="PROSITE" id="PS51192">
    <property type="entry name" value="HELICASE_ATP_BIND_1"/>
    <property type="match status" value="1"/>
</dbReference>
<dbReference type="PROSITE" id="PS51194">
    <property type="entry name" value="HELICASE_CTER"/>
    <property type="match status" value="1"/>
</dbReference>
<reference key="1">
    <citation type="journal article" date="2009" name="PLoS Biol.">
        <title>Lineage-specific biology revealed by a finished genome assembly of the mouse.</title>
        <authorList>
            <person name="Church D.M."/>
            <person name="Goodstadt L."/>
            <person name="Hillier L.W."/>
            <person name="Zody M.C."/>
            <person name="Goldstein S."/>
            <person name="She X."/>
            <person name="Bult C.J."/>
            <person name="Agarwala R."/>
            <person name="Cherry J.L."/>
            <person name="DiCuccio M."/>
            <person name="Hlavina W."/>
            <person name="Kapustin Y."/>
            <person name="Meric P."/>
            <person name="Maglott D."/>
            <person name="Birtle Z."/>
            <person name="Marques A.C."/>
            <person name="Graves T."/>
            <person name="Zhou S."/>
            <person name="Teague B."/>
            <person name="Potamousis K."/>
            <person name="Churas C."/>
            <person name="Place M."/>
            <person name="Herschleb J."/>
            <person name="Runnheim R."/>
            <person name="Forrest D."/>
            <person name="Amos-Landgraf J."/>
            <person name="Schwartz D.C."/>
            <person name="Cheng Z."/>
            <person name="Lindblad-Toh K."/>
            <person name="Eichler E.E."/>
            <person name="Ponting C.P."/>
        </authorList>
    </citation>
    <scope>NUCLEOTIDE SEQUENCE [LARGE SCALE GENOMIC DNA]</scope>
    <source>
        <strain>C57BL/6J</strain>
    </source>
</reference>
<reference key="2">
    <citation type="journal article" date="2004" name="Genome Res.">
        <title>The status, quality, and expansion of the NIH full-length cDNA project: the Mammalian Gene Collection (MGC).</title>
        <authorList>
            <consortium name="The MGC Project Team"/>
        </authorList>
    </citation>
    <scope>NUCLEOTIDE SEQUENCE [LARGE SCALE MRNA]</scope>
    <source>
        <strain>C57BL/6J</strain>
        <tissue>Embryonic brain</tissue>
    </source>
</reference>
<reference key="3">
    <citation type="journal article" date="2003" name="Eur. J. Immunol.">
        <title>Somatic hypermutation does not require Rad54 and Rad54B-mediated homologous recombination.</title>
        <authorList>
            <person name="Bross L."/>
            <person name="Wesoly J."/>
            <person name="Buerstedde J.-M."/>
            <person name="Kanaar R."/>
            <person name="Jacobs H."/>
        </authorList>
    </citation>
    <scope>FUNCTION</scope>
</reference>
<protein>
    <recommendedName>
        <fullName>DNA repair and recombination protein RAD54B</fullName>
        <ecNumber>3.6.4.-</ecNumber>
    </recommendedName>
    <alternativeName>
        <fullName>RAD54 homolog B</fullName>
    </alternativeName>
</protein>
<feature type="chain" id="PRO_0000074341" description="DNA repair and recombination protein RAD54B">
    <location>
        <begin position="1"/>
        <end position="886"/>
    </location>
</feature>
<feature type="domain" description="Helicase ATP-binding" evidence="3">
    <location>
        <begin position="291"/>
        <end position="458"/>
    </location>
</feature>
<feature type="domain" description="Helicase C-terminal" evidence="4">
    <location>
        <begin position="627"/>
        <end position="788"/>
    </location>
</feature>
<feature type="region of interest" description="Disordered" evidence="5">
    <location>
        <begin position="1"/>
        <end position="95"/>
    </location>
</feature>
<feature type="short sequence motif" description="DEGH box">
    <location>
        <begin position="409"/>
        <end position="412"/>
    </location>
</feature>
<feature type="compositionally biased region" description="Polar residues" evidence="5">
    <location>
        <begin position="1"/>
        <end position="12"/>
    </location>
</feature>
<feature type="compositionally biased region" description="Polar residues" evidence="5">
    <location>
        <begin position="47"/>
        <end position="62"/>
    </location>
</feature>
<feature type="compositionally biased region" description="Basic and acidic residues" evidence="5">
    <location>
        <begin position="67"/>
        <end position="76"/>
    </location>
</feature>
<feature type="compositionally biased region" description="Basic and acidic residues" evidence="5">
    <location>
        <begin position="86"/>
        <end position="95"/>
    </location>
</feature>
<feature type="binding site" evidence="3">
    <location>
        <begin position="304"/>
        <end position="311"/>
    </location>
    <ligand>
        <name>ATP</name>
        <dbReference type="ChEBI" id="CHEBI:30616"/>
    </ligand>
</feature>
<feature type="modified residue" description="Phosphoserine" evidence="2">
    <location>
        <position position="14"/>
    </location>
</feature>
<name>RA54B_MOUSE</name>
<proteinExistence type="evidence at transcript level"/>
<accession>Q6PFE3</accession>
<accession>A2AIV0</accession>
<gene>
    <name type="primary">Rad54b</name>
</gene>
<organism>
    <name type="scientific">Mus musculus</name>
    <name type="common">Mouse</name>
    <dbReference type="NCBI Taxonomy" id="10090"/>
    <lineage>
        <taxon>Eukaryota</taxon>
        <taxon>Metazoa</taxon>
        <taxon>Chordata</taxon>
        <taxon>Craniata</taxon>
        <taxon>Vertebrata</taxon>
        <taxon>Euteleostomi</taxon>
        <taxon>Mammalia</taxon>
        <taxon>Eutheria</taxon>
        <taxon>Euarchontoglires</taxon>
        <taxon>Glires</taxon>
        <taxon>Rodentia</taxon>
        <taxon>Myomorpha</taxon>
        <taxon>Muroidea</taxon>
        <taxon>Muridae</taxon>
        <taxon>Murinae</taxon>
        <taxon>Mus</taxon>
        <taxon>Mus</taxon>
    </lineage>
</organism>
<evidence type="ECO:0000250" key="1"/>
<evidence type="ECO:0000250" key="2">
    <source>
        <dbReference type="UniProtKB" id="Q9Y620"/>
    </source>
</evidence>
<evidence type="ECO:0000255" key="3">
    <source>
        <dbReference type="PROSITE-ProRule" id="PRU00541"/>
    </source>
</evidence>
<evidence type="ECO:0000255" key="4">
    <source>
        <dbReference type="PROSITE-ProRule" id="PRU00542"/>
    </source>
</evidence>
<evidence type="ECO:0000256" key="5">
    <source>
        <dbReference type="SAM" id="MobiDB-lite"/>
    </source>
</evidence>
<evidence type="ECO:0000269" key="6">
    <source>
    </source>
</evidence>
<evidence type="ECO:0000305" key="7"/>
<keyword id="KW-0067">ATP-binding</keyword>
<keyword id="KW-0227">DNA damage</keyword>
<keyword id="KW-0234">DNA repair</keyword>
<keyword id="KW-0238">DNA-binding</keyword>
<keyword id="KW-0347">Helicase</keyword>
<keyword id="KW-0378">Hydrolase</keyword>
<keyword id="KW-0547">Nucleotide-binding</keyword>
<keyword id="KW-0539">Nucleus</keyword>
<keyword id="KW-0597">Phosphoprotein</keyword>
<keyword id="KW-1185">Reference proteome</keyword>